<feature type="chain" id="PRO_0000071158" description="UBA domain-containing protein 7">
    <location>
        <begin position="1"/>
        <end position="697"/>
    </location>
</feature>
<feature type="domain" description="UBA" evidence="1">
    <location>
        <begin position="181"/>
        <end position="221"/>
    </location>
</feature>
<feature type="repeat" description="TPR">
    <location>
        <begin position="412"/>
        <end position="445"/>
    </location>
</feature>
<feature type="domain" description="J" evidence="2">
    <location>
        <begin position="633"/>
        <end position="696"/>
    </location>
</feature>
<feature type="region of interest" description="Disordered" evidence="3">
    <location>
        <begin position="1"/>
        <end position="94"/>
    </location>
</feature>
<feature type="region of interest" description="Disordered" evidence="3">
    <location>
        <begin position="306"/>
        <end position="346"/>
    </location>
</feature>
<feature type="region of interest" description="Disordered" evidence="3">
    <location>
        <begin position="547"/>
        <end position="573"/>
    </location>
</feature>
<feature type="compositionally biased region" description="Low complexity" evidence="3">
    <location>
        <begin position="13"/>
        <end position="32"/>
    </location>
</feature>
<feature type="compositionally biased region" description="Basic and acidic residues" evidence="3">
    <location>
        <begin position="62"/>
        <end position="77"/>
    </location>
</feature>
<feature type="compositionally biased region" description="Polar residues" evidence="3">
    <location>
        <begin position="81"/>
        <end position="92"/>
    </location>
</feature>
<feature type="compositionally biased region" description="Basic and acidic residues" evidence="3">
    <location>
        <begin position="323"/>
        <end position="333"/>
    </location>
</feature>
<feature type="compositionally biased region" description="Polar residues" evidence="3">
    <location>
        <begin position="334"/>
        <end position="345"/>
    </location>
</feature>
<feature type="compositionally biased region" description="Polar residues" evidence="3">
    <location>
        <begin position="559"/>
        <end position="573"/>
    </location>
</feature>
<organism>
    <name type="scientific">Schizosaccharomyces pombe (strain 972 / ATCC 24843)</name>
    <name type="common">Fission yeast</name>
    <dbReference type="NCBI Taxonomy" id="284812"/>
    <lineage>
        <taxon>Eukaryota</taxon>
        <taxon>Fungi</taxon>
        <taxon>Dikarya</taxon>
        <taxon>Ascomycota</taxon>
        <taxon>Taphrinomycotina</taxon>
        <taxon>Schizosaccharomycetes</taxon>
        <taxon>Schizosaccharomycetales</taxon>
        <taxon>Schizosaccharomycetaceae</taxon>
        <taxon>Schizosaccharomyces</taxon>
    </lineage>
</organism>
<evidence type="ECO:0000255" key="1">
    <source>
        <dbReference type="PROSITE-ProRule" id="PRU00212"/>
    </source>
</evidence>
<evidence type="ECO:0000255" key="2">
    <source>
        <dbReference type="PROSITE-ProRule" id="PRU00286"/>
    </source>
</evidence>
<evidence type="ECO:0000256" key="3">
    <source>
        <dbReference type="SAM" id="MobiDB-lite"/>
    </source>
</evidence>
<evidence type="ECO:0000305" key="4"/>
<name>UCP7_SCHPO</name>
<gene>
    <name type="primary">ucp7</name>
    <name type="ORF">SPAC17A5.12</name>
</gene>
<reference key="1">
    <citation type="journal article" date="2002" name="Nature">
        <title>The genome sequence of Schizosaccharomyces pombe.</title>
        <authorList>
            <person name="Wood V."/>
            <person name="Gwilliam R."/>
            <person name="Rajandream M.A."/>
            <person name="Lyne M.H."/>
            <person name="Lyne R."/>
            <person name="Stewart A."/>
            <person name="Sgouros J.G."/>
            <person name="Peat N."/>
            <person name="Hayles J."/>
            <person name="Baker S.G."/>
            <person name="Basham D."/>
            <person name="Bowman S."/>
            <person name="Brooks K."/>
            <person name="Brown D."/>
            <person name="Brown S."/>
            <person name="Chillingworth T."/>
            <person name="Churcher C.M."/>
            <person name="Collins M."/>
            <person name="Connor R."/>
            <person name="Cronin A."/>
            <person name="Davis P."/>
            <person name="Feltwell T."/>
            <person name="Fraser A."/>
            <person name="Gentles S."/>
            <person name="Goble A."/>
            <person name="Hamlin N."/>
            <person name="Harris D.E."/>
            <person name="Hidalgo J."/>
            <person name="Hodgson G."/>
            <person name="Holroyd S."/>
            <person name="Hornsby T."/>
            <person name="Howarth S."/>
            <person name="Huckle E.J."/>
            <person name="Hunt S."/>
            <person name="Jagels K."/>
            <person name="James K.D."/>
            <person name="Jones L."/>
            <person name="Jones M."/>
            <person name="Leather S."/>
            <person name="McDonald S."/>
            <person name="McLean J."/>
            <person name="Mooney P."/>
            <person name="Moule S."/>
            <person name="Mungall K.L."/>
            <person name="Murphy L.D."/>
            <person name="Niblett D."/>
            <person name="Odell C."/>
            <person name="Oliver K."/>
            <person name="O'Neil S."/>
            <person name="Pearson D."/>
            <person name="Quail M.A."/>
            <person name="Rabbinowitsch E."/>
            <person name="Rutherford K.M."/>
            <person name="Rutter S."/>
            <person name="Saunders D."/>
            <person name="Seeger K."/>
            <person name="Sharp S."/>
            <person name="Skelton J."/>
            <person name="Simmonds M.N."/>
            <person name="Squares R."/>
            <person name="Squares S."/>
            <person name="Stevens K."/>
            <person name="Taylor K."/>
            <person name="Taylor R.G."/>
            <person name="Tivey A."/>
            <person name="Walsh S.V."/>
            <person name="Warren T."/>
            <person name="Whitehead S."/>
            <person name="Woodward J.R."/>
            <person name="Volckaert G."/>
            <person name="Aert R."/>
            <person name="Robben J."/>
            <person name="Grymonprez B."/>
            <person name="Weltjens I."/>
            <person name="Vanstreels E."/>
            <person name="Rieger M."/>
            <person name="Schaefer M."/>
            <person name="Mueller-Auer S."/>
            <person name="Gabel C."/>
            <person name="Fuchs M."/>
            <person name="Duesterhoeft A."/>
            <person name="Fritzc C."/>
            <person name="Holzer E."/>
            <person name="Moestl D."/>
            <person name="Hilbert H."/>
            <person name="Borzym K."/>
            <person name="Langer I."/>
            <person name="Beck A."/>
            <person name="Lehrach H."/>
            <person name="Reinhardt R."/>
            <person name="Pohl T.M."/>
            <person name="Eger P."/>
            <person name="Zimmermann W."/>
            <person name="Wedler H."/>
            <person name="Wambutt R."/>
            <person name="Purnelle B."/>
            <person name="Goffeau A."/>
            <person name="Cadieu E."/>
            <person name="Dreano S."/>
            <person name="Gloux S."/>
            <person name="Lelaure V."/>
            <person name="Mottier S."/>
            <person name="Galibert F."/>
            <person name="Aves S.J."/>
            <person name="Xiang Z."/>
            <person name="Hunt C."/>
            <person name="Moore K."/>
            <person name="Hurst S.M."/>
            <person name="Lucas M."/>
            <person name="Rochet M."/>
            <person name="Gaillardin C."/>
            <person name="Tallada V.A."/>
            <person name="Garzon A."/>
            <person name="Thode G."/>
            <person name="Daga R.R."/>
            <person name="Cruzado L."/>
            <person name="Jimenez J."/>
            <person name="Sanchez M."/>
            <person name="del Rey F."/>
            <person name="Benito J."/>
            <person name="Dominguez A."/>
            <person name="Revuelta J.L."/>
            <person name="Moreno S."/>
            <person name="Armstrong J."/>
            <person name="Forsburg S.L."/>
            <person name="Cerutti L."/>
            <person name="Lowe T."/>
            <person name="McCombie W.R."/>
            <person name="Paulsen I."/>
            <person name="Potashkin J."/>
            <person name="Shpakovski G.V."/>
            <person name="Ussery D."/>
            <person name="Barrell B.G."/>
            <person name="Nurse P."/>
        </authorList>
    </citation>
    <scope>NUCLEOTIDE SEQUENCE [LARGE SCALE GENOMIC DNA]</scope>
    <source>
        <strain>972 / ATCC 24843</strain>
    </source>
</reference>
<reference key="2">
    <citation type="journal article" date="2001" name="Nat. Cell Biol.">
        <title>Proteins containing the UBA domain are able to bind to multi-ubiquitin chains.</title>
        <authorList>
            <person name="Wilkinson C.R.M."/>
            <person name="Seeger M."/>
            <person name="Hartmann-Petersen R."/>
            <person name="Stone M."/>
            <person name="Wallace M."/>
            <person name="Semple C."/>
            <person name="Gordon C."/>
        </authorList>
    </citation>
    <scope>IDENTIFICATION</scope>
</reference>
<accession>O13773</accession>
<comment type="caution">
    <text evidence="4">The initiator methionine may be further downstream.</text>
</comment>
<proteinExistence type="predicted"/>
<keyword id="KW-0143">Chaperone</keyword>
<keyword id="KW-1185">Reference proteome</keyword>
<keyword id="KW-0802">TPR repeat</keyword>
<protein>
    <recommendedName>
        <fullName>UBA domain-containing protein 7</fullName>
    </recommendedName>
</protein>
<sequence>MDDLLDFNFYDKSTPSNQNNYSNNNSRTPSYSLPAPVAQKKNAQIPLKASKPEDPFANLFQKKTDNKISLKELERQKVGTPDSNSTPKSSNYDPFENLEILHQLSNTPRDKDAVIHDKIEENKRPISQPQVSASEKVTLKDLSLEPHQPVSLPAFENIGSETSIPFENHNEITNMNTAKDKLSSNEMYEKLRDLGFSDDQSRLALENSGSLEDAIEYILEKDNAKGQYREGEAYEAFSDSSAKTQFSDFQALSNQLKSQLFEKANDLWNIGRKKLRDAVEERRAVKDPSKPRWMDASHDFGREATPEILPKTPIPKRKPHKVPMNEKVSEDRITTNQSRSGNDESSLVDFLTSKSDNSSFNFPSDTYEGTENILETAYESTTARQVNNNKPGKSTVKKREEETLNNMVSALVEEQQSTGNELFRKGDFSQAIEEFTNSLSQLPAKHTKRVPLLSNRSLCYQKVGDLKTCLQDVDELVDIIGEEKGHGESIRDKSMNDYYVKNMVRKAQVLEQLEKYQESLNIWKDLIADGQISKLYIDGKHRCEAAISSHSSESHSKRTTQQPKSTPNHTNIKVKSERLQHVRMAQQKAEQLDEERSRLREPVQQIVNKWKEGKESNLRALLASLDTILWPECRWQKVSLSELVLPKKVKIAYMKAVSRVHPDKLPQQTSVEHQLIAESAFSILNHAWELFKQQNDL</sequence>
<dbReference type="EMBL" id="CU329670">
    <property type="protein sequence ID" value="CAB11512.1"/>
    <property type="molecule type" value="Genomic_DNA"/>
</dbReference>
<dbReference type="PIR" id="T37827">
    <property type="entry name" value="T37827"/>
</dbReference>
<dbReference type="RefSeq" id="NP_593480.1">
    <property type="nucleotide sequence ID" value="NM_001018913.1"/>
</dbReference>
<dbReference type="SMR" id="O13773"/>
<dbReference type="BioGRID" id="278666">
    <property type="interactions" value="2"/>
</dbReference>
<dbReference type="FunCoup" id="O13773">
    <property type="interactions" value="95"/>
</dbReference>
<dbReference type="STRING" id="284812.O13773"/>
<dbReference type="iPTMnet" id="O13773"/>
<dbReference type="PaxDb" id="4896-SPAC17A5.12.1"/>
<dbReference type="EnsemblFungi" id="SPAC17A5.12.1">
    <property type="protein sequence ID" value="SPAC17A5.12.1:pep"/>
    <property type="gene ID" value="SPAC17A5.12"/>
</dbReference>
<dbReference type="GeneID" id="2542191"/>
<dbReference type="KEGG" id="spo:2542191"/>
<dbReference type="PomBase" id="SPAC17A5.12">
    <property type="gene designation" value="ucp7"/>
</dbReference>
<dbReference type="VEuPathDB" id="FungiDB:SPAC17A5.12"/>
<dbReference type="eggNOG" id="KOG0431">
    <property type="taxonomic scope" value="Eukaryota"/>
</dbReference>
<dbReference type="eggNOG" id="KOG1124">
    <property type="taxonomic scope" value="Eukaryota"/>
</dbReference>
<dbReference type="HOGENOM" id="CLU_395452_0_0_1"/>
<dbReference type="InParanoid" id="O13773"/>
<dbReference type="OMA" id="TILWPEC"/>
<dbReference type="PhylomeDB" id="O13773"/>
<dbReference type="Reactome" id="R-SPO-8856828">
    <property type="pathway name" value="Clathrin-mediated endocytosis"/>
</dbReference>
<dbReference type="PRO" id="PR:O13773"/>
<dbReference type="Proteomes" id="UP000002485">
    <property type="component" value="Chromosome I"/>
</dbReference>
<dbReference type="GO" id="GO:0005789">
    <property type="term" value="C:endoplasmic reticulum membrane"/>
    <property type="evidence" value="ECO:0000266"/>
    <property type="project" value="PomBase"/>
</dbReference>
<dbReference type="GO" id="GO:0005794">
    <property type="term" value="C:Golgi apparatus"/>
    <property type="evidence" value="ECO:0007005"/>
    <property type="project" value="PomBase"/>
</dbReference>
<dbReference type="GO" id="GO:0043231">
    <property type="term" value="C:intracellular membrane-bounded organelle"/>
    <property type="evidence" value="ECO:0000318"/>
    <property type="project" value="GO_Central"/>
</dbReference>
<dbReference type="GO" id="GO:0031982">
    <property type="term" value="C:vesicle"/>
    <property type="evidence" value="ECO:0000318"/>
    <property type="project" value="GO_Central"/>
</dbReference>
<dbReference type="GO" id="GO:0030276">
    <property type="term" value="F:clathrin binding"/>
    <property type="evidence" value="ECO:0000318"/>
    <property type="project" value="GO_Central"/>
</dbReference>
<dbReference type="GO" id="GO:0030544">
    <property type="term" value="F:Hsp70 protein binding"/>
    <property type="evidence" value="ECO:0000255"/>
    <property type="project" value="PomBase"/>
</dbReference>
<dbReference type="GO" id="GO:0031593">
    <property type="term" value="F:polyubiquitin modification-dependent protein binding"/>
    <property type="evidence" value="ECO:0000304"/>
    <property type="project" value="PomBase"/>
</dbReference>
<dbReference type="GO" id="GO:0072318">
    <property type="term" value="P:clathrin coat disassembly"/>
    <property type="evidence" value="ECO:0000318"/>
    <property type="project" value="GO_Central"/>
</dbReference>
<dbReference type="GO" id="GO:0072583">
    <property type="term" value="P:clathrin-dependent endocytosis"/>
    <property type="evidence" value="ECO:0000318"/>
    <property type="project" value="GO_Central"/>
</dbReference>
<dbReference type="FunFam" id="1.10.287.110:FF:000002">
    <property type="entry name" value="putative tyrosine-protein phosphatase auxilin isoform X2"/>
    <property type="match status" value="1"/>
</dbReference>
<dbReference type="FunFam" id="1.25.40.10:FF:000354">
    <property type="entry name" value="UBA domain-containing protein 7"/>
    <property type="match status" value="1"/>
</dbReference>
<dbReference type="Gene3D" id="1.10.8.10">
    <property type="entry name" value="DNA helicase RuvA subunit, C-terminal domain"/>
    <property type="match status" value="1"/>
</dbReference>
<dbReference type="Gene3D" id="1.10.287.110">
    <property type="entry name" value="DnaJ domain"/>
    <property type="match status" value="1"/>
</dbReference>
<dbReference type="Gene3D" id="1.25.40.10">
    <property type="entry name" value="Tetratricopeptide repeat domain"/>
    <property type="match status" value="1"/>
</dbReference>
<dbReference type="InterPro" id="IPR001623">
    <property type="entry name" value="DnaJ_domain"/>
</dbReference>
<dbReference type="InterPro" id="IPR036869">
    <property type="entry name" value="J_dom_sf"/>
</dbReference>
<dbReference type="InterPro" id="IPR011990">
    <property type="entry name" value="TPR-like_helical_dom_sf"/>
</dbReference>
<dbReference type="InterPro" id="IPR019734">
    <property type="entry name" value="TPR_rpt"/>
</dbReference>
<dbReference type="InterPro" id="IPR015940">
    <property type="entry name" value="UBA"/>
</dbReference>
<dbReference type="PANTHER" id="PTHR23172">
    <property type="entry name" value="AUXILIN/CYCLIN G-ASSOCIATED KINASE-RELATED"/>
    <property type="match status" value="1"/>
</dbReference>
<dbReference type="PANTHER" id="PTHR23172:SF19">
    <property type="entry name" value="J DOMAIN-CONTAINING PROTEIN"/>
    <property type="match status" value="1"/>
</dbReference>
<dbReference type="Pfam" id="PF00627">
    <property type="entry name" value="UBA"/>
    <property type="match status" value="1"/>
</dbReference>
<dbReference type="SUPFAM" id="SSF46565">
    <property type="entry name" value="Chaperone J-domain"/>
    <property type="match status" value="1"/>
</dbReference>
<dbReference type="SUPFAM" id="SSF48452">
    <property type="entry name" value="TPR-like"/>
    <property type="match status" value="1"/>
</dbReference>
<dbReference type="PROSITE" id="PS50076">
    <property type="entry name" value="DNAJ_2"/>
    <property type="match status" value="1"/>
</dbReference>
<dbReference type="PROSITE" id="PS50005">
    <property type="entry name" value="TPR"/>
    <property type="match status" value="1"/>
</dbReference>
<dbReference type="PROSITE" id="PS50030">
    <property type="entry name" value="UBA"/>
    <property type="match status" value="1"/>
</dbReference>